<name>ARC_BIFAS</name>
<reference key="1">
    <citation type="journal article" date="2009" name="J. Bacteriol.">
        <title>Comparison of the complete genome sequences of Bifidobacterium animalis subsp. lactis DSM 10140 and Bl-04.</title>
        <authorList>
            <person name="Barrangou R."/>
            <person name="Briczinski E.P."/>
            <person name="Traeger L.L."/>
            <person name="Loquasto J.R."/>
            <person name="Richards M."/>
            <person name="Horvath P."/>
            <person name="Coute-Monvoisin A.-C."/>
            <person name="Leyer G."/>
            <person name="Rendulic S."/>
            <person name="Steele J.L."/>
            <person name="Broadbent J.R."/>
            <person name="Oberg T."/>
            <person name="Dudley E.G."/>
            <person name="Schuster S."/>
            <person name="Romero D.A."/>
            <person name="Roberts R.F."/>
        </authorList>
    </citation>
    <scope>NUCLEOTIDE SEQUENCE [LARGE SCALE GENOMIC DNA]</scope>
    <source>
        <strain>DSM 10140 / CCUG 37979 / JCM 10602 / LMG 18314 / NRRL B-41405 / UR1</strain>
    </source>
</reference>
<feature type="chain" id="PRO_0000396967" description="AAA ATPase forming ring-shaped complexes">
    <location>
        <begin position="1"/>
        <end position="522"/>
    </location>
</feature>
<feature type="region of interest" description="Disordered" evidence="2">
    <location>
        <begin position="1"/>
        <end position="26"/>
    </location>
</feature>
<feature type="coiled-coil region" evidence="1">
    <location>
        <begin position="20"/>
        <end position="57"/>
    </location>
</feature>
<feature type="binding site" evidence="1">
    <location>
        <begin position="248"/>
        <end position="253"/>
    </location>
    <ligand>
        <name>ATP</name>
        <dbReference type="ChEBI" id="CHEBI:30616"/>
    </ligand>
</feature>
<evidence type="ECO:0000255" key="1">
    <source>
        <dbReference type="HAMAP-Rule" id="MF_02112"/>
    </source>
</evidence>
<evidence type="ECO:0000256" key="2">
    <source>
        <dbReference type="SAM" id="MobiDB-lite"/>
    </source>
</evidence>
<keyword id="KW-0067">ATP-binding</keyword>
<keyword id="KW-0175">Coiled coil</keyword>
<keyword id="KW-0547">Nucleotide-binding</keyword>
<organism>
    <name type="scientific">Bifidobacterium animalis subsp. lactis (strain DSM 10140 / CCUG 37979 / JCM 10602 / LMG 18314 / NRRL B-41405 / UR1)</name>
    <dbReference type="NCBI Taxonomy" id="555970"/>
    <lineage>
        <taxon>Bacteria</taxon>
        <taxon>Bacillati</taxon>
        <taxon>Actinomycetota</taxon>
        <taxon>Actinomycetes</taxon>
        <taxon>Bifidobacteriales</taxon>
        <taxon>Bifidobacteriaceae</taxon>
        <taxon>Bifidobacterium</taxon>
    </lineage>
</organism>
<comment type="subunit">
    <text evidence="1">Homohexamer. Assembles into a hexameric ring structure.</text>
</comment>
<comment type="similarity">
    <text evidence="1">Belongs to the AAA ATPase family.</text>
</comment>
<accession>C6AHX0</accession>
<sequence length="522" mass="56906">MGQEKHTDAASQSRDPEAVAAHENDQLRQRNHALAKALTRATEELRKAKAQLEQFMAPPLTMATMVRVHRCSTDEHGVRHASAEILNGNRRQIVPLSPTVNPAQLGSGQGVLLDANMVIVDSCETPTTGPMRAVSESLADGRLIVSDVGGNRGVVMRASAVARTPINVDDRVVIDPSGTYVLSVLPQEQAQDLLLEETPDVSFTDIGGLDEQIARIRDAVQLPFQHRDLFDRFDLKAPKGVLLYGPPGNGKTLIAKAIAHELAAGSGNDGVFLSVKGPELLNKFVGESERLIRRIFERAKELSGAGRPVIVFIDEMDSLLRTRGTGVSSDVETTIVPQFLTELDGVESLDDVMVIGASNRIDMIDPAVLRPGRLDVKIHVTRPDETAAMAITRHYLTDALPLEPGRDADALAASLVRDLFRRDESRLLATLDEQGRRRGIYMADIVSGAMLRNIVDRAKTKAVKAEILHGSVSRDDEPQGITEARIHEAIDDEYEQNRSTINETDPGQWLRINALTLAADGV</sequence>
<dbReference type="EMBL" id="CP001606">
    <property type="protein sequence ID" value="ACS47577.1"/>
    <property type="molecule type" value="Genomic_DNA"/>
</dbReference>
<dbReference type="RefSeq" id="WP_004218902.1">
    <property type="nucleotide sequence ID" value="NC_012815.1"/>
</dbReference>
<dbReference type="SMR" id="C6AHX0"/>
<dbReference type="GeneID" id="29695932"/>
<dbReference type="KEGG" id="blt:Balat_0637"/>
<dbReference type="HOGENOM" id="CLU_036054_0_0_11"/>
<dbReference type="BioCyc" id="BANI555970:G1GVE-658-MONOMER"/>
<dbReference type="GO" id="GO:0000502">
    <property type="term" value="C:proteasome complex"/>
    <property type="evidence" value="ECO:0007669"/>
    <property type="project" value="InterPro"/>
</dbReference>
<dbReference type="GO" id="GO:0005524">
    <property type="term" value="F:ATP binding"/>
    <property type="evidence" value="ECO:0007669"/>
    <property type="project" value="UniProtKB-UniRule"/>
</dbReference>
<dbReference type="GO" id="GO:0016887">
    <property type="term" value="F:ATP hydrolysis activity"/>
    <property type="evidence" value="ECO:0007669"/>
    <property type="project" value="UniProtKB-UniRule"/>
</dbReference>
<dbReference type="GO" id="GO:0019941">
    <property type="term" value="P:modification-dependent protein catabolic process"/>
    <property type="evidence" value="ECO:0007669"/>
    <property type="project" value="InterPro"/>
</dbReference>
<dbReference type="GO" id="GO:0010498">
    <property type="term" value="P:proteasomal protein catabolic process"/>
    <property type="evidence" value="ECO:0007669"/>
    <property type="project" value="InterPro"/>
</dbReference>
<dbReference type="FunFam" id="3.40.50.300:FF:001025">
    <property type="entry name" value="ATPase family, AAA domain-containing 2B"/>
    <property type="match status" value="1"/>
</dbReference>
<dbReference type="Gene3D" id="1.10.8.60">
    <property type="match status" value="1"/>
</dbReference>
<dbReference type="Gene3D" id="2.40.50.140">
    <property type="entry name" value="Nucleic acid-binding proteins"/>
    <property type="match status" value="1"/>
</dbReference>
<dbReference type="Gene3D" id="3.40.50.300">
    <property type="entry name" value="P-loop containing nucleotide triphosphate hydrolases"/>
    <property type="match status" value="1"/>
</dbReference>
<dbReference type="HAMAP" id="MF_02112">
    <property type="entry name" value="ARC_ATPase"/>
    <property type="match status" value="1"/>
</dbReference>
<dbReference type="InterPro" id="IPR003593">
    <property type="entry name" value="AAA+_ATPase"/>
</dbReference>
<dbReference type="InterPro" id="IPR050168">
    <property type="entry name" value="AAA_ATPase_domain"/>
</dbReference>
<dbReference type="InterPro" id="IPR003959">
    <property type="entry name" value="ATPase_AAA_core"/>
</dbReference>
<dbReference type="InterPro" id="IPR003960">
    <property type="entry name" value="ATPase_AAA_CS"/>
</dbReference>
<dbReference type="InterPro" id="IPR012340">
    <property type="entry name" value="NA-bd_OB-fold"/>
</dbReference>
<dbReference type="InterPro" id="IPR027417">
    <property type="entry name" value="P-loop_NTPase"/>
</dbReference>
<dbReference type="InterPro" id="IPR032501">
    <property type="entry name" value="Prot_ATP_ID_OB_2nd"/>
</dbReference>
<dbReference type="InterPro" id="IPR041626">
    <property type="entry name" value="Prot_ATP_ID_OB_N"/>
</dbReference>
<dbReference type="InterPro" id="IPR022482">
    <property type="entry name" value="Proteasome_ATPase"/>
</dbReference>
<dbReference type="NCBIfam" id="TIGR03689">
    <property type="entry name" value="pup_AAA"/>
    <property type="match status" value="1"/>
</dbReference>
<dbReference type="PANTHER" id="PTHR23077">
    <property type="entry name" value="AAA-FAMILY ATPASE"/>
    <property type="match status" value="1"/>
</dbReference>
<dbReference type="PANTHER" id="PTHR23077:SF144">
    <property type="entry name" value="PROTEASOME-ASSOCIATED ATPASE"/>
    <property type="match status" value="1"/>
</dbReference>
<dbReference type="Pfam" id="PF00004">
    <property type="entry name" value="AAA"/>
    <property type="match status" value="1"/>
</dbReference>
<dbReference type="Pfam" id="PF16450">
    <property type="entry name" value="Prot_ATP_ID_OB_C"/>
    <property type="match status" value="1"/>
</dbReference>
<dbReference type="Pfam" id="PF17758">
    <property type="entry name" value="Prot_ATP_ID_OB_N"/>
    <property type="match status" value="1"/>
</dbReference>
<dbReference type="SMART" id="SM00382">
    <property type="entry name" value="AAA"/>
    <property type="match status" value="1"/>
</dbReference>
<dbReference type="SUPFAM" id="SSF52540">
    <property type="entry name" value="P-loop containing nucleoside triphosphate hydrolases"/>
    <property type="match status" value="1"/>
</dbReference>
<dbReference type="PROSITE" id="PS00674">
    <property type="entry name" value="AAA"/>
    <property type="match status" value="1"/>
</dbReference>
<protein>
    <recommendedName>
        <fullName evidence="1">AAA ATPase forming ring-shaped complexes</fullName>
        <shortName evidence="1">ARC</shortName>
    </recommendedName>
</protein>
<gene>
    <name evidence="1" type="primary">arc</name>
    <name type="ordered locus">Balat_0637</name>
</gene>
<proteinExistence type="inferred from homology"/>